<gene>
    <name evidence="1" type="primary">atpD</name>
    <name type="ordered locus">TGAM_0148</name>
</gene>
<evidence type="ECO:0000255" key="1">
    <source>
        <dbReference type="HAMAP-Rule" id="MF_00271"/>
    </source>
</evidence>
<protein>
    <recommendedName>
        <fullName evidence="1">A-type ATP synthase subunit D</fullName>
    </recommendedName>
</protein>
<sequence>MAELLNVKPTRMELLNLKRRIQLAKKGHKLLKDKQDALIMEFFTIYDEALQLRRELNEKMGVAFETLTRAQIEAGTLPLREAALAVKPNKEVEIKRRNVMGVSVPLIEAEGFKRKASERGYAFVSTSPFVDIAAEKFEEVLDLAVRLAEVEETLKRLAREIETTKRRVNALEYIIIPRMEATVKFIKQRLDEMERENFFRLKRVKALIEARSGS</sequence>
<reference key="1">
    <citation type="journal article" date="2007" name="Genome Biol.">
        <title>Genome analysis and genome-wide proteomics of Thermococcus gammatolerans, the most radioresistant organism known amongst the Archaea.</title>
        <authorList>
            <person name="Zivanovic Y."/>
            <person name="Armengaud J."/>
            <person name="Lagorce A."/>
            <person name="Leplat C."/>
            <person name="Guerin P."/>
            <person name="Dutertre M."/>
            <person name="Anthouard V."/>
            <person name="Forterre P."/>
            <person name="Wincker P."/>
            <person name="Confalonieri F."/>
        </authorList>
    </citation>
    <scope>NUCLEOTIDE SEQUENCE [LARGE SCALE GENOMIC DNA]</scope>
    <source>
        <strain>DSM 15229 / JCM 11827 / EJ3</strain>
    </source>
</reference>
<proteinExistence type="inferred from homology"/>
<name>AATD_THEGJ</name>
<dbReference type="EMBL" id="CP001398">
    <property type="protein sequence ID" value="ACS32650.1"/>
    <property type="molecule type" value="Genomic_DNA"/>
</dbReference>
<dbReference type="RefSeq" id="WP_015857770.1">
    <property type="nucleotide sequence ID" value="NC_012804.1"/>
</dbReference>
<dbReference type="SMR" id="C5A338"/>
<dbReference type="STRING" id="593117.TGAM_0148"/>
<dbReference type="PaxDb" id="593117-TGAM_0148"/>
<dbReference type="GeneID" id="7988728"/>
<dbReference type="KEGG" id="tga:TGAM_0148"/>
<dbReference type="PATRIC" id="fig|593117.10.peg.151"/>
<dbReference type="eggNOG" id="arCOG04101">
    <property type="taxonomic scope" value="Archaea"/>
</dbReference>
<dbReference type="HOGENOM" id="CLU_069688_2_1_2"/>
<dbReference type="OrthoDB" id="117390at2157"/>
<dbReference type="Proteomes" id="UP000001488">
    <property type="component" value="Chromosome"/>
</dbReference>
<dbReference type="GO" id="GO:0005886">
    <property type="term" value="C:plasma membrane"/>
    <property type="evidence" value="ECO:0007669"/>
    <property type="project" value="UniProtKB-SubCell"/>
</dbReference>
<dbReference type="GO" id="GO:0005524">
    <property type="term" value="F:ATP binding"/>
    <property type="evidence" value="ECO:0007669"/>
    <property type="project" value="UniProtKB-UniRule"/>
</dbReference>
<dbReference type="GO" id="GO:0046933">
    <property type="term" value="F:proton-transporting ATP synthase activity, rotational mechanism"/>
    <property type="evidence" value="ECO:0007669"/>
    <property type="project" value="UniProtKB-UniRule"/>
</dbReference>
<dbReference type="GO" id="GO:0046961">
    <property type="term" value="F:proton-transporting ATPase activity, rotational mechanism"/>
    <property type="evidence" value="ECO:0007669"/>
    <property type="project" value="InterPro"/>
</dbReference>
<dbReference type="GO" id="GO:0042777">
    <property type="term" value="P:proton motive force-driven plasma membrane ATP synthesis"/>
    <property type="evidence" value="ECO:0007669"/>
    <property type="project" value="UniProtKB-UniRule"/>
</dbReference>
<dbReference type="FunFam" id="1.10.287.3240:FF:000007">
    <property type="entry name" value="V-type ATP synthase subunit D"/>
    <property type="match status" value="1"/>
</dbReference>
<dbReference type="Gene3D" id="1.10.287.3240">
    <property type="match status" value="1"/>
</dbReference>
<dbReference type="HAMAP" id="MF_00271">
    <property type="entry name" value="ATP_synth_D_arch"/>
    <property type="match status" value="1"/>
</dbReference>
<dbReference type="InterPro" id="IPR002699">
    <property type="entry name" value="V_ATPase_D"/>
</dbReference>
<dbReference type="NCBIfam" id="NF001545">
    <property type="entry name" value="PRK00373.1-4"/>
    <property type="match status" value="1"/>
</dbReference>
<dbReference type="NCBIfam" id="TIGR00309">
    <property type="entry name" value="V_ATPase_subD"/>
    <property type="match status" value="1"/>
</dbReference>
<dbReference type="PANTHER" id="PTHR11671">
    <property type="entry name" value="V-TYPE ATP SYNTHASE SUBUNIT D"/>
    <property type="match status" value="1"/>
</dbReference>
<dbReference type="Pfam" id="PF01813">
    <property type="entry name" value="ATP-synt_D"/>
    <property type="match status" value="1"/>
</dbReference>
<feature type="chain" id="PRO_1000209797" description="A-type ATP synthase subunit D">
    <location>
        <begin position="1"/>
        <end position="214"/>
    </location>
</feature>
<accession>C5A338</accession>
<organism>
    <name type="scientific">Thermococcus gammatolerans (strain DSM 15229 / JCM 11827 / EJ3)</name>
    <dbReference type="NCBI Taxonomy" id="593117"/>
    <lineage>
        <taxon>Archaea</taxon>
        <taxon>Methanobacteriati</taxon>
        <taxon>Methanobacteriota</taxon>
        <taxon>Thermococci</taxon>
        <taxon>Thermococcales</taxon>
        <taxon>Thermococcaceae</taxon>
        <taxon>Thermococcus</taxon>
    </lineage>
</organism>
<comment type="function">
    <text evidence="1">Component of the A-type ATP synthase that produces ATP from ADP in the presence of a proton gradient across the membrane.</text>
</comment>
<comment type="subunit">
    <text evidence="1">Has multiple subunits with at least A(3), B(3), C, D, E, F, H, I and proteolipid K(x).</text>
</comment>
<comment type="subcellular location">
    <subcellularLocation>
        <location evidence="1">Cell membrane</location>
        <topology evidence="1">Peripheral membrane protein</topology>
    </subcellularLocation>
</comment>
<comment type="similarity">
    <text evidence="1">Belongs to the V-ATPase D subunit family.</text>
</comment>
<keyword id="KW-0066">ATP synthesis</keyword>
<keyword id="KW-1003">Cell membrane</keyword>
<keyword id="KW-0375">Hydrogen ion transport</keyword>
<keyword id="KW-0406">Ion transport</keyword>
<keyword id="KW-0472">Membrane</keyword>
<keyword id="KW-1185">Reference proteome</keyword>
<keyword id="KW-0813">Transport</keyword>